<gene>
    <name type="primary">yqeI</name>
    <name type="ordered locus">b2847</name>
    <name type="ordered locus">JW2815</name>
</gene>
<dbReference type="EMBL" id="U29581">
    <property type="protein sequence ID" value="AAB40494.1"/>
    <property type="molecule type" value="Genomic_DNA"/>
</dbReference>
<dbReference type="EMBL" id="U00096">
    <property type="protein sequence ID" value="AAC75886.1"/>
    <property type="molecule type" value="Genomic_DNA"/>
</dbReference>
<dbReference type="EMBL" id="AP009048">
    <property type="protein sequence ID" value="BAE76916.1"/>
    <property type="molecule type" value="Genomic_DNA"/>
</dbReference>
<dbReference type="PIR" id="H65067">
    <property type="entry name" value="H65067"/>
</dbReference>
<dbReference type="RefSeq" id="NP_417324.1">
    <property type="nucleotide sequence ID" value="NC_000913.3"/>
</dbReference>
<dbReference type="RefSeq" id="WP_001300710.1">
    <property type="nucleotide sequence ID" value="NZ_LN832404.1"/>
</dbReference>
<dbReference type="SMR" id="Q46942"/>
<dbReference type="BioGRID" id="4261700">
    <property type="interactions" value="81"/>
</dbReference>
<dbReference type="BioGRID" id="851654">
    <property type="interactions" value="1"/>
</dbReference>
<dbReference type="DIP" id="DIP-12856N"/>
<dbReference type="FunCoup" id="Q46942">
    <property type="interactions" value="28"/>
</dbReference>
<dbReference type="IntAct" id="Q46942">
    <property type="interactions" value="3"/>
</dbReference>
<dbReference type="STRING" id="511145.b2847"/>
<dbReference type="PaxDb" id="511145-b2847"/>
<dbReference type="EnsemblBacteria" id="AAC75886">
    <property type="protein sequence ID" value="AAC75886"/>
    <property type="gene ID" value="b2847"/>
</dbReference>
<dbReference type="GeneID" id="947327"/>
<dbReference type="KEGG" id="ecj:JW2815"/>
<dbReference type="KEGG" id="eco:b2847"/>
<dbReference type="KEGG" id="ecoc:C3026_15630"/>
<dbReference type="PATRIC" id="fig|1411691.4.peg.3886"/>
<dbReference type="EchoBASE" id="EB2903"/>
<dbReference type="eggNOG" id="COG3710">
    <property type="taxonomic scope" value="Bacteria"/>
</dbReference>
<dbReference type="HOGENOM" id="CLU_075545_0_1_6"/>
<dbReference type="InParanoid" id="Q46942"/>
<dbReference type="OMA" id="ANCLSHY"/>
<dbReference type="OrthoDB" id="7003224at2"/>
<dbReference type="PhylomeDB" id="Q46942"/>
<dbReference type="BioCyc" id="EcoCyc:G7467-MONOMER"/>
<dbReference type="PHI-base" id="PHI:10944"/>
<dbReference type="PRO" id="PR:Q46942"/>
<dbReference type="Proteomes" id="UP000000625">
    <property type="component" value="Chromosome"/>
</dbReference>
<dbReference type="GO" id="GO:0003677">
    <property type="term" value="F:DNA binding"/>
    <property type="evidence" value="ECO:0007669"/>
    <property type="project" value="UniProtKB-KW"/>
</dbReference>
<dbReference type="GO" id="GO:0000160">
    <property type="term" value="P:phosphorelay signal transduction system"/>
    <property type="evidence" value="ECO:0007669"/>
    <property type="project" value="InterPro"/>
</dbReference>
<dbReference type="GO" id="GO:0006355">
    <property type="term" value="P:regulation of DNA-templated transcription"/>
    <property type="evidence" value="ECO:0007669"/>
    <property type="project" value="InterPro"/>
</dbReference>
<dbReference type="Gene3D" id="1.10.10.10">
    <property type="entry name" value="Winged helix-like DNA-binding domain superfamily/Winged helix DNA-binding domain"/>
    <property type="match status" value="1"/>
</dbReference>
<dbReference type="InterPro" id="IPR001867">
    <property type="entry name" value="OmpR/PhoB-type_DNA-bd"/>
</dbReference>
<dbReference type="InterPro" id="IPR016032">
    <property type="entry name" value="Sig_transdc_resp-reg_C-effctor"/>
</dbReference>
<dbReference type="InterPro" id="IPR036388">
    <property type="entry name" value="WH-like_DNA-bd_sf"/>
</dbReference>
<dbReference type="Pfam" id="PF00486">
    <property type="entry name" value="Trans_reg_C"/>
    <property type="match status" value="1"/>
</dbReference>
<dbReference type="SMART" id="SM00862">
    <property type="entry name" value="Trans_reg_C"/>
    <property type="match status" value="1"/>
</dbReference>
<dbReference type="SUPFAM" id="SSF46894">
    <property type="entry name" value="C-terminal effector domain of the bipartite response regulators"/>
    <property type="match status" value="1"/>
</dbReference>
<dbReference type="PROSITE" id="PS51755">
    <property type="entry name" value="OMPR_PHOB"/>
    <property type="match status" value="1"/>
</dbReference>
<protein>
    <recommendedName>
        <fullName>Uncharacterized protein YqeI</fullName>
    </recommendedName>
</protein>
<accession>Q46942</accession>
<accession>Q2M9Z0</accession>
<feature type="chain" id="PRO_0000169347" description="Uncharacterized protein YqeI">
    <location>
        <begin position="1"/>
        <end position="269"/>
    </location>
</feature>
<feature type="DNA-binding region" description="OmpR/PhoB-type" evidence="1">
    <location>
        <begin position="3"/>
        <end position="105"/>
    </location>
</feature>
<evidence type="ECO:0000255" key="1">
    <source>
        <dbReference type="PROSITE-ProRule" id="PRU01091"/>
    </source>
</evidence>
<evidence type="ECO:0000305" key="2"/>
<name>YQEI_ECOLI</name>
<comment type="similarity">
    <text evidence="2">To V.cholerae cholera toxin transcriptional activator (ToxR).</text>
</comment>
<reference key="1">
    <citation type="journal article" date="1997" name="Science">
        <title>The complete genome sequence of Escherichia coli K-12.</title>
        <authorList>
            <person name="Blattner F.R."/>
            <person name="Plunkett G. III"/>
            <person name="Bloch C.A."/>
            <person name="Perna N.T."/>
            <person name="Burland V."/>
            <person name="Riley M."/>
            <person name="Collado-Vides J."/>
            <person name="Glasner J.D."/>
            <person name="Rode C.K."/>
            <person name="Mayhew G.F."/>
            <person name="Gregor J."/>
            <person name="Davis N.W."/>
            <person name="Kirkpatrick H.A."/>
            <person name="Goeden M.A."/>
            <person name="Rose D.J."/>
            <person name="Mau B."/>
            <person name="Shao Y."/>
        </authorList>
    </citation>
    <scope>NUCLEOTIDE SEQUENCE [LARGE SCALE GENOMIC DNA]</scope>
    <source>
        <strain>K12 / MG1655 / ATCC 47076</strain>
    </source>
</reference>
<reference key="2">
    <citation type="journal article" date="2006" name="Mol. Syst. Biol.">
        <title>Highly accurate genome sequences of Escherichia coli K-12 strains MG1655 and W3110.</title>
        <authorList>
            <person name="Hayashi K."/>
            <person name="Morooka N."/>
            <person name="Yamamoto Y."/>
            <person name="Fujita K."/>
            <person name="Isono K."/>
            <person name="Choi S."/>
            <person name="Ohtsubo E."/>
            <person name="Baba T."/>
            <person name="Wanner B.L."/>
            <person name="Mori H."/>
            <person name="Horiuchi T."/>
        </authorList>
    </citation>
    <scope>NUCLEOTIDE SEQUENCE [LARGE SCALE GENOMIC DNA]</scope>
    <source>
        <strain>K12 / W3110 / ATCC 27325 / DSM 5911</strain>
    </source>
</reference>
<keyword id="KW-0238">DNA-binding</keyword>
<keyword id="KW-1185">Reference proteome</keyword>
<keyword id="KW-0804">Transcription</keyword>
<keyword id="KW-0805">Transcription regulation</keyword>
<organism>
    <name type="scientific">Escherichia coli (strain K12)</name>
    <dbReference type="NCBI Taxonomy" id="83333"/>
    <lineage>
        <taxon>Bacteria</taxon>
        <taxon>Pseudomonadati</taxon>
        <taxon>Pseudomonadota</taxon>
        <taxon>Gammaproteobacteria</taxon>
        <taxon>Enterobacterales</taxon>
        <taxon>Enterobacteriaceae</taxon>
        <taxon>Escherichia</taxon>
    </lineage>
</organism>
<proteinExistence type="predicted"/>
<sequence>MYWIINDNIEFWPEHRKLISVHNADLNVVLTTPASRCLSLLLEAFPDVVAQQDFFTRVWEEEGMRVPTNTLYQNISIIRRGFRAVGDTTHSLIATVPRRGFKIHNDINIQNHVINSSTDAHTHNAPPAIKVNAGYKESIGGAKNFNNKILKHIKSHLIMLSAFVIGAYSAYWLWNNNQPKPFFKDYKTVAEINGCHFNVTEDTIDGLKEFDKYKTRILDSGINCKKHPWLYFPLAKSSPGMIVMACNKNYNQHEVANCLTLSYREVNRD</sequence>